<name>RNP3_METKA</name>
<accession>Q8TYB5</accession>
<reference key="1">
    <citation type="journal article" date="2002" name="Proc. Natl. Acad. Sci. U.S.A.">
        <title>The complete genome of hyperthermophile Methanopyrus kandleri AV19 and monophyly of archaeal methanogens.</title>
        <authorList>
            <person name="Slesarev A.I."/>
            <person name="Mezhevaya K.V."/>
            <person name="Makarova K.S."/>
            <person name="Polushin N.N."/>
            <person name="Shcherbinina O.V."/>
            <person name="Shakhova V.V."/>
            <person name="Belova G.I."/>
            <person name="Aravind L."/>
            <person name="Natale D.A."/>
            <person name="Rogozin I.B."/>
            <person name="Tatusov R.L."/>
            <person name="Wolf Y.I."/>
            <person name="Stetter K.O."/>
            <person name="Malykh A.G."/>
            <person name="Koonin E.V."/>
            <person name="Kozyavkin S.A."/>
        </authorList>
    </citation>
    <scope>NUCLEOTIDE SEQUENCE [LARGE SCALE GENOMIC DNA]</scope>
    <source>
        <strain>AV19 / DSM 6324 / JCM 9639 / NBRC 100938</strain>
    </source>
</reference>
<proteinExistence type="inferred from homology"/>
<gene>
    <name evidence="1" type="primary">rnp3</name>
    <name type="ordered locus">MK0387</name>
</gene>
<evidence type="ECO:0000255" key="1">
    <source>
        <dbReference type="HAMAP-Rule" id="MF_00756"/>
    </source>
</evidence>
<keyword id="KW-0963">Cytoplasm</keyword>
<keyword id="KW-0255">Endonuclease</keyword>
<keyword id="KW-0378">Hydrolase</keyword>
<keyword id="KW-0540">Nuclease</keyword>
<keyword id="KW-1185">Reference proteome</keyword>
<keyword id="KW-0819">tRNA processing</keyword>
<sequence>MRVSENFALRVHVDEVDPLRMALAAERLDYEIAVLCLELEAERLNIDDLRWLIEEIRDIREHVESVLVLPGCKLEAESAGALRRAIRRTRPLVYLLAVGGGDPKINRAAVSDTRVDLLSHPERGNPHAGLGKYEIELAREKWTYVEIDLSRLFRREGERLAWQVSRIRDLLRLRRRKRFPTTVALGARDPLELIRPKQVEDLLKLMGFEDSEVKEMCVEAPREILRWNAACKHVFTVPGVVSLG</sequence>
<feature type="chain" id="PRO_0000140040" description="Ribonuclease P protein component 3">
    <location>
        <begin position="1"/>
        <end position="244"/>
    </location>
</feature>
<organism>
    <name type="scientific">Methanopyrus kandleri (strain AV19 / DSM 6324 / JCM 9639 / NBRC 100938)</name>
    <dbReference type="NCBI Taxonomy" id="190192"/>
    <lineage>
        <taxon>Archaea</taxon>
        <taxon>Methanobacteriati</taxon>
        <taxon>Methanobacteriota</taxon>
        <taxon>Methanomada group</taxon>
        <taxon>Methanopyri</taxon>
        <taxon>Methanopyrales</taxon>
        <taxon>Methanopyraceae</taxon>
        <taxon>Methanopyrus</taxon>
    </lineage>
</organism>
<protein>
    <recommendedName>
        <fullName evidence="1">Ribonuclease P protein component 3</fullName>
        <shortName evidence="1">RNase P component 3</shortName>
        <ecNumber evidence="1">3.1.26.5</ecNumber>
    </recommendedName>
    <alternativeName>
        <fullName evidence="1">Rpp30</fullName>
    </alternativeName>
</protein>
<comment type="function">
    <text evidence="1">Part of ribonuclease P, a protein complex that generates mature tRNA molecules by cleaving their 5'-ends.</text>
</comment>
<comment type="catalytic activity">
    <reaction evidence="1">
        <text>Endonucleolytic cleavage of RNA, removing 5'-extranucleotides from tRNA precursor.</text>
        <dbReference type="EC" id="3.1.26.5"/>
    </reaction>
</comment>
<comment type="subunit">
    <text evidence="1">Consists of a catalytic RNA component and at least 4-5 protein subunits.</text>
</comment>
<comment type="subcellular location">
    <subcellularLocation>
        <location evidence="1">Cytoplasm</location>
    </subcellularLocation>
</comment>
<comment type="similarity">
    <text evidence="1">Belongs to the eukaryotic/archaeal RNase P protein component 3 family.</text>
</comment>
<dbReference type="EC" id="3.1.26.5" evidence="1"/>
<dbReference type="EMBL" id="AE009439">
    <property type="protein sequence ID" value="AAM01602.1"/>
    <property type="molecule type" value="Genomic_DNA"/>
</dbReference>
<dbReference type="RefSeq" id="WP_011018757.1">
    <property type="nucleotide sequence ID" value="NC_003551.1"/>
</dbReference>
<dbReference type="SMR" id="Q8TYB5"/>
<dbReference type="STRING" id="190192.MK0387"/>
<dbReference type="PaxDb" id="190192-MK0387"/>
<dbReference type="EnsemblBacteria" id="AAM01602">
    <property type="protein sequence ID" value="AAM01602"/>
    <property type="gene ID" value="MK0387"/>
</dbReference>
<dbReference type="GeneID" id="1477690"/>
<dbReference type="KEGG" id="mka:MK0387"/>
<dbReference type="HOGENOM" id="CLU_074509_0_0_2"/>
<dbReference type="InParanoid" id="Q8TYB5"/>
<dbReference type="OrthoDB" id="85765at2157"/>
<dbReference type="Proteomes" id="UP000001826">
    <property type="component" value="Chromosome"/>
</dbReference>
<dbReference type="GO" id="GO:0005737">
    <property type="term" value="C:cytoplasm"/>
    <property type="evidence" value="ECO:0007669"/>
    <property type="project" value="UniProtKB-SubCell"/>
</dbReference>
<dbReference type="GO" id="GO:0030677">
    <property type="term" value="C:ribonuclease P complex"/>
    <property type="evidence" value="ECO:0007669"/>
    <property type="project" value="UniProtKB-UniRule"/>
</dbReference>
<dbReference type="GO" id="GO:0004526">
    <property type="term" value="F:ribonuclease P activity"/>
    <property type="evidence" value="ECO:0007669"/>
    <property type="project" value="UniProtKB-UniRule"/>
</dbReference>
<dbReference type="GO" id="GO:0001682">
    <property type="term" value="P:tRNA 5'-leader removal"/>
    <property type="evidence" value="ECO:0007669"/>
    <property type="project" value="UniProtKB-UniRule"/>
</dbReference>
<dbReference type="Gene3D" id="3.20.20.140">
    <property type="entry name" value="Metal-dependent hydrolases"/>
    <property type="match status" value="1"/>
</dbReference>
<dbReference type="HAMAP" id="MF_00756">
    <property type="entry name" value="RNase_P_3"/>
    <property type="match status" value="1"/>
</dbReference>
<dbReference type="InterPro" id="IPR016195">
    <property type="entry name" value="Pol/histidinol_Pase-like"/>
</dbReference>
<dbReference type="InterPro" id="IPR023539">
    <property type="entry name" value="RNase_P_comp-3_arc"/>
</dbReference>
<dbReference type="InterPro" id="IPR002738">
    <property type="entry name" value="RNase_P_p30"/>
</dbReference>
<dbReference type="Pfam" id="PF01876">
    <property type="entry name" value="RNase_P_p30"/>
    <property type="match status" value="1"/>
</dbReference>
<dbReference type="SUPFAM" id="SSF89550">
    <property type="entry name" value="PHP domain-like"/>
    <property type="match status" value="1"/>
</dbReference>